<keyword id="KW-0238">DNA-binding</keyword>
<keyword id="KW-0479">Metal-binding</keyword>
<keyword id="KW-0539">Nucleus</keyword>
<keyword id="KW-1185">Reference proteome</keyword>
<keyword id="KW-0677">Repeat</keyword>
<keyword id="KW-0804">Transcription</keyword>
<keyword id="KW-0805">Transcription regulation</keyword>
<keyword id="KW-0862">Zinc</keyword>
<keyword id="KW-0863">Zinc-finger</keyword>
<evidence type="ECO:0000255" key="1">
    <source>
        <dbReference type="PROSITE-ProRule" id="PRU00042"/>
    </source>
</evidence>
<evidence type="ECO:0000305" key="2"/>
<accession>P18746</accession>
<sequence length="196" mass="22659">IVGKSYSCTDCGRSFYAKGHLLNHQKNHGGEKRFTCTECGKIFTRKSNLRKHQRIHTGDNLFTCTECGKRFTEKRNLLIHQRIHTGEKPFTCTECGKSFNLWSTLRNHHKIHTGEKPFTCPECGKKFSVKNSLRKHQRTHARKKLFTCTECGKTFTKKSTFHMHQSTHTGEKPFTCTECGKSFAKNGNLRIHQMTH</sequence>
<organism>
    <name type="scientific">Xenopus laevis</name>
    <name type="common">African clawed frog</name>
    <dbReference type="NCBI Taxonomy" id="8355"/>
    <lineage>
        <taxon>Eukaryota</taxon>
        <taxon>Metazoa</taxon>
        <taxon>Chordata</taxon>
        <taxon>Craniata</taxon>
        <taxon>Vertebrata</taxon>
        <taxon>Euteleostomi</taxon>
        <taxon>Amphibia</taxon>
        <taxon>Batrachia</taxon>
        <taxon>Anura</taxon>
        <taxon>Pipoidea</taxon>
        <taxon>Pipidae</taxon>
        <taxon>Xenopodinae</taxon>
        <taxon>Xenopus</taxon>
        <taxon>Xenopus</taxon>
    </lineage>
</organism>
<reference key="1">
    <citation type="journal article" date="1989" name="J. Mol. Biol.">
        <title>Second-order repeats in Xenopus laevis finger proteins.</title>
        <authorList>
            <person name="Nietfeld W."/>
            <person name="El-Baradi T."/>
            <person name="Mentzel H."/>
            <person name="Pieler T."/>
            <person name="Koester M."/>
            <person name="Poeting A."/>
            <person name="Knoechel W."/>
        </authorList>
    </citation>
    <scope>NUCLEOTIDE SEQUENCE</scope>
</reference>
<feature type="chain" id="PRO_0000047821" description="Oocyte zinc finger protein XlCOF26">
    <location>
        <begin position="1" status="less than"/>
        <end position="196" status="greater than"/>
    </location>
</feature>
<feature type="zinc finger region" description="C2H2-type 1" evidence="1">
    <location>
        <begin position="6"/>
        <end position="28"/>
    </location>
</feature>
<feature type="zinc finger region" description="C2H2-type 2" evidence="1">
    <location>
        <begin position="34"/>
        <end position="56"/>
    </location>
</feature>
<feature type="zinc finger region" description="C2H2-type 3" evidence="1">
    <location>
        <begin position="62"/>
        <end position="84"/>
    </location>
</feature>
<feature type="zinc finger region" description="C2H2-type 4" evidence="1">
    <location>
        <begin position="90"/>
        <end position="112"/>
    </location>
</feature>
<feature type="zinc finger region" description="C2H2-type 5" evidence="1">
    <location>
        <begin position="118"/>
        <end position="140"/>
    </location>
</feature>
<feature type="zinc finger region" description="C2H2-type 6" evidence="1">
    <location>
        <begin position="146"/>
        <end position="168"/>
    </location>
</feature>
<feature type="zinc finger region" description="C2H2-type 7" evidence="1">
    <location>
        <begin position="174"/>
        <end position="196"/>
    </location>
</feature>
<feature type="non-terminal residue">
    <location>
        <position position="1"/>
    </location>
</feature>
<feature type="non-terminal residue">
    <location>
        <position position="196"/>
    </location>
</feature>
<protein>
    <recommendedName>
        <fullName>Oocyte zinc finger protein XlCOF26</fullName>
    </recommendedName>
</protein>
<dbReference type="PIR" id="S06555">
    <property type="entry name" value="S06555"/>
</dbReference>
<dbReference type="SMR" id="P18746"/>
<dbReference type="Proteomes" id="UP000186698">
    <property type="component" value="Unplaced"/>
</dbReference>
<dbReference type="GO" id="GO:0005634">
    <property type="term" value="C:nucleus"/>
    <property type="evidence" value="ECO:0007669"/>
    <property type="project" value="UniProtKB-SubCell"/>
</dbReference>
<dbReference type="GO" id="GO:0000981">
    <property type="term" value="F:DNA-binding transcription factor activity, RNA polymerase II-specific"/>
    <property type="evidence" value="ECO:0000318"/>
    <property type="project" value="GO_Central"/>
</dbReference>
<dbReference type="GO" id="GO:0000978">
    <property type="term" value="F:RNA polymerase II cis-regulatory region sequence-specific DNA binding"/>
    <property type="evidence" value="ECO:0000318"/>
    <property type="project" value="GO_Central"/>
</dbReference>
<dbReference type="GO" id="GO:0008270">
    <property type="term" value="F:zinc ion binding"/>
    <property type="evidence" value="ECO:0007669"/>
    <property type="project" value="UniProtKB-KW"/>
</dbReference>
<dbReference type="GO" id="GO:0006357">
    <property type="term" value="P:regulation of transcription by RNA polymerase II"/>
    <property type="evidence" value="ECO:0000318"/>
    <property type="project" value="GO_Central"/>
</dbReference>
<dbReference type="FunFam" id="3.30.160.60:FF:000706">
    <property type="entry name" value="Zinc finger protein"/>
    <property type="match status" value="1"/>
</dbReference>
<dbReference type="FunFam" id="3.30.160.60:FF:001854">
    <property type="entry name" value="Zinc finger protein"/>
    <property type="match status" value="1"/>
</dbReference>
<dbReference type="FunFam" id="3.30.160.60:FF:000759">
    <property type="entry name" value="zinc finger protein 16"/>
    <property type="match status" value="1"/>
</dbReference>
<dbReference type="FunFam" id="3.30.160.60:FF:000358">
    <property type="entry name" value="zinc finger protein 24"/>
    <property type="match status" value="1"/>
</dbReference>
<dbReference type="FunFam" id="3.30.160.60:FF:002343">
    <property type="entry name" value="Zinc finger protein 33A"/>
    <property type="match status" value="1"/>
</dbReference>
<dbReference type="FunFam" id="3.30.160.60:FF:002797">
    <property type="entry name" value="Zinc finger protein 613"/>
    <property type="match status" value="1"/>
</dbReference>
<dbReference type="FunFam" id="3.30.160.60:FF:000495">
    <property type="entry name" value="zinc finger protein 668"/>
    <property type="match status" value="1"/>
</dbReference>
<dbReference type="Gene3D" id="3.30.160.60">
    <property type="entry name" value="Classic Zinc Finger"/>
    <property type="match status" value="7"/>
</dbReference>
<dbReference type="InterPro" id="IPR036236">
    <property type="entry name" value="Znf_C2H2_sf"/>
</dbReference>
<dbReference type="InterPro" id="IPR013087">
    <property type="entry name" value="Znf_C2H2_type"/>
</dbReference>
<dbReference type="PANTHER" id="PTHR24390:SF159">
    <property type="entry name" value="GROWTH FACTOR INDEPENDENT 1 TRANSCRIPTIONAL REPRESSOR"/>
    <property type="match status" value="1"/>
</dbReference>
<dbReference type="PANTHER" id="PTHR24390">
    <property type="entry name" value="ZINC FINGER PROTEIN"/>
    <property type="match status" value="1"/>
</dbReference>
<dbReference type="Pfam" id="PF00096">
    <property type="entry name" value="zf-C2H2"/>
    <property type="match status" value="7"/>
</dbReference>
<dbReference type="SMART" id="SM00355">
    <property type="entry name" value="ZnF_C2H2"/>
    <property type="match status" value="7"/>
</dbReference>
<dbReference type="SUPFAM" id="SSF57667">
    <property type="entry name" value="beta-beta-alpha zinc fingers"/>
    <property type="match status" value="4"/>
</dbReference>
<dbReference type="PROSITE" id="PS00028">
    <property type="entry name" value="ZINC_FINGER_C2H2_1"/>
    <property type="match status" value="7"/>
</dbReference>
<dbReference type="PROSITE" id="PS50157">
    <property type="entry name" value="ZINC_FINGER_C2H2_2"/>
    <property type="match status" value="7"/>
</dbReference>
<name>ZO26_XENLA</name>
<comment type="function">
    <text>May be involved in transcriptional regulation.</text>
</comment>
<comment type="subcellular location">
    <subcellularLocation>
        <location evidence="2">Nucleus</location>
    </subcellularLocation>
</comment>
<comment type="similarity">
    <text evidence="2">Belongs to the krueppel C2H2-type zinc-finger protein family.</text>
</comment>
<proteinExistence type="inferred from homology"/>